<dbReference type="EC" id="1.1.1.270" evidence="3"/>
<dbReference type="EC" id="1.1.1.210" evidence="3"/>
<dbReference type="EMBL" id="L41519">
    <property type="protein sequence ID" value="AAB81242.1"/>
    <property type="molecule type" value="mRNA"/>
</dbReference>
<dbReference type="EMBL" id="BC012715">
    <property type="protein sequence ID" value="AAH12715.1"/>
    <property type="molecule type" value="mRNA"/>
</dbReference>
<dbReference type="CCDS" id="CCDS17666.1"/>
<dbReference type="PIR" id="A57559">
    <property type="entry name" value="A57559"/>
</dbReference>
<dbReference type="RefSeq" id="NP_032321.2">
    <property type="nucleotide sequence ID" value="NM_008295.2"/>
</dbReference>
<dbReference type="SMR" id="Q61694"/>
<dbReference type="FunCoup" id="Q61694">
    <property type="interactions" value="109"/>
</dbReference>
<dbReference type="STRING" id="10090.ENSMUSP00000041442"/>
<dbReference type="iPTMnet" id="Q61694"/>
<dbReference type="PhosphoSitePlus" id="Q61694"/>
<dbReference type="SwissPalm" id="Q61694"/>
<dbReference type="jPOST" id="Q61694"/>
<dbReference type="PaxDb" id="10090-ENSMUSP00000041442"/>
<dbReference type="PeptideAtlas" id="Q61694"/>
<dbReference type="ProteomicsDB" id="285686"/>
<dbReference type="DNASU" id="15496"/>
<dbReference type="Ensembl" id="ENSMUST00000044094.6">
    <property type="protein sequence ID" value="ENSMUSP00000041442.5"/>
    <property type="gene ID" value="ENSMUSG00000038092.7"/>
</dbReference>
<dbReference type="GeneID" id="15496"/>
<dbReference type="KEGG" id="mmu:15496"/>
<dbReference type="UCSC" id="uc008qqb.1">
    <property type="organism name" value="mouse"/>
</dbReference>
<dbReference type="AGR" id="MGI:104645"/>
<dbReference type="CTD" id="15496"/>
<dbReference type="MGI" id="MGI:104645">
    <property type="gene designation" value="Hsd3b5"/>
</dbReference>
<dbReference type="VEuPathDB" id="HostDB:ENSMUSG00000038092"/>
<dbReference type="eggNOG" id="KOG1430">
    <property type="taxonomic scope" value="Eukaryota"/>
</dbReference>
<dbReference type="GeneTree" id="ENSGT00940000155444"/>
<dbReference type="HOGENOM" id="CLU_007383_6_3_1"/>
<dbReference type="InParanoid" id="Q61694"/>
<dbReference type="OMA" id="HRESTWP"/>
<dbReference type="OrthoDB" id="1925334at2759"/>
<dbReference type="PhylomeDB" id="Q61694"/>
<dbReference type="TreeFam" id="TF343138"/>
<dbReference type="Reactome" id="R-MMU-193048">
    <property type="pathway name" value="Androgen biosynthesis"/>
</dbReference>
<dbReference type="Reactome" id="R-MMU-193993">
    <property type="pathway name" value="Mineralocorticoid biosynthesis"/>
</dbReference>
<dbReference type="Reactome" id="R-MMU-194002">
    <property type="pathway name" value="Glucocorticoid biosynthesis"/>
</dbReference>
<dbReference type="BioGRID-ORCS" id="15496">
    <property type="hits" value="2 hits in 57 CRISPR screens"/>
</dbReference>
<dbReference type="PRO" id="PR:Q61694"/>
<dbReference type="Proteomes" id="UP000000589">
    <property type="component" value="Chromosome 3"/>
</dbReference>
<dbReference type="RNAct" id="Q61694">
    <property type="molecule type" value="protein"/>
</dbReference>
<dbReference type="Bgee" id="ENSMUSG00000038092">
    <property type="expression patterns" value="Expressed in left lobe of liver and 23 other cell types or tissues"/>
</dbReference>
<dbReference type="GO" id="GO:0005789">
    <property type="term" value="C:endoplasmic reticulum membrane"/>
    <property type="evidence" value="ECO:0007669"/>
    <property type="project" value="UniProtKB-SubCell"/>
</dbReference>
<dbReference type="GO" id="GO:0005743">
    <property type="term" value="C:mitochondrial inner membrane"/>
    <property type="evidence" value="ECO:0007005"/>
    <property type="project" value="MGI"/>
</dbReference>
<dbReference type="GO" id="GO:0005739">
    <property type="term" value="C:mitochondrion"/>
    <property type="evidence" value="ECO:0007005"/>
    <property type="project" value="MGI"/>
</dbReference>
<dbReference type="GO" id="GO:0000253">
    <property type="term" value="F:3-beta-hydroxysteroid 3-dehydrogenase (NADP+) activity"/>
    <property type="evidence" value="ECO:0007669"/>
    <property type="project" value="UniProtKB-EC"/>
</dbReference>
<dbReference type="GO" id="GO:0047024">
    <property type="term" value="F:5-alpha-androstane-3-beta,17-beta-diol dehydrogenase (NADP+) activity"/>
    <property type="evidence" value="ECO:0007669"/>
    <property type="project" value="UniProtKB-EC"/>
</dbReference>
<dbReference type="GO" id="GO:0035634">
    <property type="term" value="P:response to stilbenoid"/>
    <property type="evidence" value="ECO:0000270"/>
    <property type="project" value="UniProtKB"/>
</dbReference>
<dbReference type="GO" id="GO:0006694">
    <property type="term" value="P:steroid biosynthetic process"/>
    <property type="evidence" value="ECO:0007669"/>
    <property type="project" value="InterPro"/>
</dbReference>
<dbReference type="FunFam" id="3.40.50.720:FF:000220">
    <property type="entry name" value="3 beta-hydroxysteroid dehydrogenase/Delta 5--&gt;4-isomerase type 1"/>
    <property type="match status" value="1"/>
</dbReference>
<dbReference type="Gene3D" id="3.40.50.720">
    <property type="entry name" value="NAD(P)-binding Rossmann-like Domain"/>
    <property type="match status" value="1"/>
</dbReference>
<dbReference type="InterPro" id="IPR002225">
    <property type="entry name" value="3Beta_OHSteriod_DH/Estase"/>
</dbReference>
<dbReference type="InterPro" id="IPR050177">
    <property type="entry name" value="Lipid_A_modif_metabolic_enz"/>
</dbReference>
<dbReference type="InterPro" id="IPR036291">
    <property type="entry name" value="NAD(P)-bd_dom_sf"/>
</dbReference>
<dbReference type="PANTHER" id="PTHR43245">
    <property type="entry name" value="BIFUNCTIONAL POLYMYXIN RESISTANCE PROTEIN ARNA"/>
    <property type="match status" value="1"/>
</dbReference>
<dbReference type="PANTHER" id="PTHR43245:SF51">
    <property type="entry name" value="SHORT CHAIN DEHYDROGENASE_REDUCTASE FAMILY 42E, MEMBER 2"/>
    <property type="match status" value="1"/>
</dbReference>
<dbReference type="Pfam" id="PF01073">
    <property type="entry name" value="3Beta_HSD"/>
    <property type="match status" value="1"/>
</dbReference>
<dbReference type="SUPFAM" id="SSF51735">
    <property type="entry name" value="NAD(P)-binding Rossmann-fold domains"/>
    <property type="match status" value="1"/>
</dbReference>
<reference key="1">
    <citation type="journal article" date="1995" name="Mol. Endocrinol.">
        <title>The mouse 3 beta-hydroxysteroid dehydrogenase multigene family includes two functionally distinct groups of proteins.</title>
        <authorList>
            <person name="Abbaszade I.G."/>
            <person name="Clarke T.R."/>
            <person name="Park C.-H.J."/>
            <person name="Payne A.H."/>
        </authorList>
    </citation>
    <scope>NUCLEOTIDE SEQUENCE [MRNA]</scope>
    <scope>FUNCTION</scope>
    <scope>CATALYTIC ACTIVITY</scope>
    <scope>BIOPHYSICOCHEMICAL PROPERTIES</scope>
    <scope>TISSUE SPECIFICITY</scope>
    <scope>PATHWAY</scope>
    <source>
        <strain>BALB/cJ</strain>
        <tissue>Liver</tissue>
    </source>
</reference>
<reference key="2">
    <citation type="journal article" date="2004" name="Genome Res.">
        <title>The status, quality, and expansion of the NIH full-length cDNA project: the Mammalian Gene Collection (MGC).</title>
        <authorList>
            <consortium name="The MGC Project Team"/>
        </authorList>
    </citation>
    <scope>NUCLEOTIDE SEQUENCE [LARGE SCALE MRNA]</scope>
    <source>
        <tissue>Salivary gland</tissue>
    </source>
</reference>
<reference key="3">
    <citation type="journal article" date="2010" name="Cell">
        <title>A tissue-specific atlas of mouse protein phosphorylation and expression.</title>
        <authorList>
            <person name="Huttlin E.L."/>
            <person name="Jedrychowski M.P."/>
            <person name="Elias J.E."/>
            <person name="Goswami T."/>
            <person name="Rad R."/>
            <person name="Beausoleil S.A."/>
            <person name="Villen J."/>
            <person name="Haas W."/>
            <person name="Sowa M.E."/>
            <person name="Gygi S.P."/>
        </authorList>
    </citation>
    <scope>IDENTIFICATION BY MASS SPECTROMETRY [LARGE SCALE ANALYSIS]</scope>
    <source>
        <tissue>Liver</tissue>
    </source>
</reference>
<reference key="4">
    <citation type="journal article" date="2013" name="Proc. Natl. Acad. Sci. U.S.A.">
        <title>Label-free quantitative proteomics of the lysine acetylome in mitochondria identifies substrates of SIRT3 in metabolic pathways.</title>
        <authorList>
            <person name="Rardin M.J."/>
            <person name="Newman J.C."/>
            <person name="Held J.M."/>
            <person name="Cusack M.P."/>
            <person name="Sorensen D.J."/>
            <person name="Li B."/>
            <person name="Schilling B."/>
            <person name="Mooney S.D."/>
            <person name="Kahn C.R."/>
            <person name="Verdin E."/>
            <person name="Gibson B.W."/>
        </authorList>
    </citation>
    <scope>ACETYLATION [LARGE SCALE ANALYSIS] AT LYS-350</scope>
    <scope>IDENTIFICATION BY MASS SPECTROMETRY [LARGE SCALE ANALYSIS]</scope>
    <source>
        <tissue>Liver</tissue>
    </source>
</reference>
<sequence length="373" mass="41892">MPGWSCLVTGAGGFLGQRIVRMLVQEEELQEIRALFRTFGRKHEEELSKLQTKAKVRVLKGDILDAQCLKRACQGMSAVIHTAAAIDPLGAASRQTILDVNLKGTQLLLDACVEASVPTFIYSSSVLVAGPNSYKEIILNAHEEEHRESTWPNPYPYSKRMAEKAVLATNGRLLKNGGTLHTCALRLPFIYGEECQVTSTTVKTALKNNSIIKKNATFSIANPVYVGNAAWAHILAARSLQDPKKSPSIQGQFYYISDNTPHQSYDDLNYTLSKEWGLCLDSGWSLPLSLLYWLAFLLETVSFLLRPVYNYRPPFNRLLITVLNSVFTISYKKAQRDLGYQPLVSWEEAKQKTSEWIGTLVKQHRETLHKKSQ</sequence>
<evidence type="ECO:0000250" key="1">
    <source>
        <dbReference type="UniProtKB" id="Q12068"/>
    </source>
</evidence>
<evidence type="ECO:0000255" key="2"/>
<evidence type="ECO:0000269" key="3">
    <source>
    </source>
</evidence>
<evidence type="ECO:0000303" key="4">
    <source>
    </source>
</evidence>
<evidence type="ECO:0000305" key="5"/>
<evidence type="ECO:0000305" key="6">
    <source>
    </source>
</evidence>
<evidence type="ECO:0000312" key="7">
    <source>
        <dbReference type="MGI" id="MGI:104645"/>
    </source>
</evidence>
<evidence type="ECO:0007744" key="8">
    <source>
    </source>
</evidence>
<comment type="function">
    <text evidence="3">Responsible for the reduction of the oxo group on the C-3 of 5alpha-androstane steroids. Catalyzes the conversion of dihydrotestosterone to its inactive form 5alpha-androstanediol, that does not bind androgen receptor/AR. Does not function as an isomerase.</text>
</comment>
<comment type="catalytic activity">
    <reaction evidence="3">
        <text>a 3beta-hydroxysteroid + NADP(+) = a 3-oxosteroid + NADPH + H(+)</text>
        <dbReference type="Rhea" id="RHEA:34787"/>
        <dbReference type="ChEBI" id="CHEBI:15378"/>
        <dbReference type="ChEBI" id="CHEBI:36836"/>
        <dbReference type="ChEBI" id="CHEBI:47788"/>
        <dbReference type="ChEBI" id="CHEBI:57783"/>
        <dbReference type="ChEBI" id="CHEBI:58349"/>
        <dbReference type="EC" id="1.1.1.270"/>
    </reaction>
</comment>
<comment type="catalytic activity">
    <reaction evidence="3">
        <text>5alpha-androstane-3beta,17beta-diol + NADP(+) = 17beta-hydroxy-5alpha-androstan-3-one + NADPH + H(+)</text>
        <dbReference type="Rhea" id="RHEA:16297"/>
        <dbReference type="ChEBI" id="CHEBI:15378"/>
        <dbReference type="ChEBI" id="CHEBI:16330"/>
        <dbReference type="ChEBI" id="CHEBI:18329"/>
        <dbReference type="ChEBI" id="CHEBI:57783"/>
        <dbReference type="ChEBI" id="CHEBI:58349"/>
        <dbReference type="EC" id="1.1.1.210"/>
    </reaction>
</comment>
<comment type="biophysicochemical properties">
    <kinetics>
        <KM evidence="3">0.47 uM for dihydrotestosterone</KM>
    </kinetics>
</comment>
<comment type="pathway">
    <text evidence="3">Steroid metabolism.</text>
</comment>
<comment type="subcellular location">
    <subcellularLocation>
        <location>Endoplasmic reticulum membrane</location>
        <topology>Single-pass membrane protein</topology>
    </subcellularLocation>
    <subcellularLocation>
        <location>Mitochondrion membrane</location>
        <topology>Single-pass membrane protein</topology>
    </subcellularLocation>
</comment>
<comment type="tissue specificity">
    <text evidence="3">Expressed in the male liver, starting in late puberty.</text>
</comment>
<comment type="similarity">
    <text evidence="5">Belongs to the 3-beta-HSD family.</text>
</comment>
<accession>Q61694</accession>
<accession>Q91X27</accession>
<feature type="chain" id="PRO_0000087784" description="NADPH-dependent 3-keto-steroid reductase Hsd3b5">
    <location>
        <begin position="1"/>
        <end position="373"/>
    </location>
</feature>
<feature type="transmembrane region" description="Helical" evidence="2">
    <location>
        <begin position="288"/>
        <end position="308"/>
    </location>
</feature>
<feature type="active site" description="Proton donor" evidence="1">
    <location>
        <position position="159"/>
    </location>
</feature>
<feature type="binding site" evidence="1">
    <location>
        <begin position="10"/>
        <end position="15"/>
    </location>
    <ligand>
        <name>NADP(+)</name>
        <dbReference type="ChEBI" id="CHEBI:58349"/>
    </ligand>
</feature>
<feature type="binding site" evidence="1">
    <location>
        <position position="155"/>
    </location>
    <ligand>
        <name>NADP(+)</name>
        <dbReference type="ChEBI" id="CHEBI:58349"/>
    </ligand>
</feature>
<feature type="binding site" evidence="1">
    <location>
        <position position="159"/>
    </location>
    <ligand>
        <name>NADP(+)</name>
        <dbReference type="ChEBI" id="CHEBI:58349"/>
    </ligand>
</feature>
<feature type="modified residue" description="N6-acetyllysine" evidence="8">
    <location>
        <position position="350"/>
    </location>
</feature>
<feature type="sequence conflict" description="In Ref. 1; AAB81242." evidence="5" ref="1">
    <original>L</original>
    <variation>R</variation>
    <location>
        <position position="89"/>
    </location>
</feature>
<feature type="sequence conflict" description="In Ref. 1; AAB81242." evidence="5" ref="1">
    <original>R</original>
    <variation>H</variation>
    <location>
        <position position="147"/>
    </location>
</feature>
<feature type="sequence conflict" description="In Ref. 1; AAB81242." evidence="5" ref="1">
    <original>S</original>
    <variation>R</variation>
    <location>
        <position position="285"/>
    </location>
</feature>
<feature type="sequence conflict" description="In Ref. 1; AAB81242." evidence="5" ref="1">
    <original>N</original>
    <variation>T</variation>
    <location>
        <position position="316"/>
    </location>
</feature>
<organism>
    <name type="scientific">Mus musculus</name>
    <name type="common">Mouse</name>
    <dbReference type="NCBI Taxonomy" id="10090"/>
    <lineage>
        <taxon>Eukaryota</taxon>
        <taxon>Metazoa</taxon>
        <taxon>Chordata</taxon>
        <taxon>Craniata</taxon>
        <taxon>Vertebrata</taxon>
        <taxon>Euteleostomi</taxon>
        <taxon>Mammalia</taxon>
        <taxon>Eutheria</taxon>
        <taxon>Euarchontoglires</taxon>
        <taxon>Glires</taxon>
        <taxon>Rodentia</taxon>
        <taxon>Myomorpha</taxon>
        <taxon>Muroidea</taxon>
        <taxon>Muridae</taxon>
        <taxon>Murinae</taxon>
        <taxon>Mus</taxon>
        <taxon>Mus</taxon>
    </lineage>
</organism>
<proteinExistence type="evidence at protein level"/>
<protein>
    <recommendedName>
        <fullName evidence="6">NADPH-dependent 3-keto-steroid reductase Hsd3b5</fullName>
    </recommendedName>
    <alternativeName>
        <fullName>3 beta-hydroxysteroid dehydrogenase type 5</fullName>
    </alternativeName>
    <alternativeName>
        <fullName evidence="4">3 beta-hydroxysteroid dehydrogenase type V</fullName>
        <shortName>3 beta-HSD V</shortName>
        <ecNumber evidence="3">1.1.1.270</ecNumber>
    </alternativeName>
    <alternativeName>
        <fullName evidence="6">Dihydrotestosterone 3-ketoreductase</fullName>
        <ecNumber evidence="3">1.1.1.210</ecNumber>
    </alternativeName>
</protein>
<name>3BHS5_MOUSE</name>
<gene>
    <name evidence="7" type="primary">Hsd3b5</name>
</gene>
<keyword id="KW-0007">Acetylation</keyword>
<keyword id="KW-0256">Endoplasmic reticulum</keyword>
<keyword id="KW-0443">Lipid metabolism</keyword>
<keyword id="KW-0472">Membrane</keyword>
<keyword id="KW-0496">Mitochondrion</keyword>
<keyword id="KW-0521">NADP</keyword>
<keyword id="KW-0560">Oxidoreductase</keyword>
<keyword id="KW-1185">Reference proteome</keyword>
<keyword id="KW-0753">Steroid metabolism</keyword>
<keyword id="KW-0812">Transmembrane</keyword>
<keyword id="KW-1133">Transmembrane helix</keyword>